<keyword id="KW-0066">ATP synthesis</keyword>
<keyword id="KW-0139">CF(1)</keyword>
<keyword id="KW-0375">Hydrogen ion transport</keyword>
<keyword id="KW-0406">Ion transport</keyword>
<keyword id="KW-0472">Membrane</keyword>
<keyword id="KW-1185">Reference proteome</keyword>
<keyword id="KW-0793">Thylakoid</keyword>
<keyword id="KW-0813">Transport</keyword>
<proteinExistence type="inferred from homology"/>
<evidence type="ECO:0000255" key="1">
    <source>
        <dbReference type="HAMAP-Rule" id="MF_00530"/>
    </source>
</evidence>
<organism>
    <name type="scientific">Nostoc punctiforme (strain ATCC 29133 / PCC 73102)</name>
    <dbReference type="NCBI Taxonomy" id="63737"/>
    <lineage>
        <taxon>Bacteria</taxon>
        <taxon>Bacillati</taxon>
        <taxon>Cyanobacteriota</taxon>
        <taxon>Cyanophyceae</taxon>
        <taxon>Nostocales</taxon>
        <taxon>Nostocaceae</taxon>
        <taxon>Nostoc</taxon>
    </lineage>
</organism>
<reference key="1">
    <citation type="journal article" date="2013" name="Plant Physiol.">
        <title>A Nostoc punctiforme Sugar Transporter Necessary to Establish a Cyanobacterium-Plant Symbiosis.</title>
        <authorList>
            <person name="Ekman M."/>
            <person name="Picossi S."/>
            <person name="Campbell E.L."/>
            <person name="Meeks J.C."/>
            <person name="Flores E."/>
        </authorList>
    </citation>
    <scope>NUCLEOTIDE SEQUENCE [LARGE SCALE GENOMIC DNA]</scope>
    <source>
        <strain>ATCC 29133 / PCC 73102</strain>
    </source>
</reference>
<comment type="function">
    <text evidence="1">Produces ATP from ADP in the presence of a proton gradient across the membrane.</text>
</comment>
<comment type="subunit">
    <text evidence="1">F-type ATPases have 2 components, CF(1) - the catalytic core - and CF(0) - the membrane proton channel. CF(1) has five subunits: alpha(3), beta(3), gamma(1), delta(1), epsilon(1). CF(0) has three main subunits: a, b and c.</text>
</comment>
<comment type="subcellular location">
    <subcellularLocation>
        <location evidence="1">Cellular thylakoid membrane</location>
        <topology evidence="1">Peripheral membrane protein</topology>
    </subcellularLocation>
</comment>
<comment type="similarity">
    <text evidence="1">Belongs to the ATPase epsilon chain family.</text>
</comment>
<feature type="chain" id="PRO_1000127872" description="ATP synthase epsilon chain">
    <location>
        <begin position="1"/>
        <end position="137"/>
    </location>
</feature>
<protein>
    <recommendedName>
        <fullName evidence="1">ATP synthase epsilon chain</fullName>
    </recommendedName>
    <alternativeName>
        <fullName evidence="1">ATP synthase F1 sector epsilon subunit</fullName>
    </alternativeName>
    <alternativeName>
        <fullName evidence="1">F-ATPase epsilon subunit</fullName>
    </alternativeName>
</protein>
<gene>
    <name evidence="1" type="primary">atpC</name>
    <name type="ordered locus">Npun_R4416</name>
</gene>
<sequence length="137" mass="14682">MTLTVRVISPDKTVWDAPAEEVVLPSTTGQLGILTGHAPLLTALDTGVMRVRAAKNQNWEAIALLGGFAEVEENEVTILVNGAERGDKINLEEARAAYNKAEAGLNQVSSEDRQAQIKANQAFKRARARFQAAGGLV</sequence>
<dbReference type="EMBL" id="CP001037">
    <property type="protein sequence ID" value="ACC82786.1"/>
    <property type="molecule type" value="Genomic_DNA"/>
</dbReference>
<dbReference type="RefSeq" id="WP_012410747.1">
    <property type="nucleotide sequence ID" value="NC_010628.1"/>
</dbReference>
<dbReference type="SMR" id="B2IUL1"/>
<dbReference type="STRING" id="63737.Npun_R4416"/>
<dbReference type="EnsemblBacteria" id="ACC82786">
    <property type="protein sequence ID" value="ACC82786"/>
    <property type="gene ID" value="Npun_R4416"/>
</dbReference>
<dbReference type="KEGG" id="npu:Npun_R4416"/>
<dbReference type="eggNOG" id="COG0355">
    <property type="taxonomic scope" value="Bacteria"/>
</dbReference>
<dbReference type="HOGENOM" id="CLU_084338_1_2_3"/>
<dbReference type="OrthoDB" id="9804110at2"/>
<dbReference type="PhylomeDB" id="B2IUL1"/>
<dbReference type="Proteomes" id="UP000001191">
    <property type="component" value="Chromosome"/>
</dbReference>
<dbReference type="GO" id="GO:0031676">
    <property type="term" value="C:plasma membrane-derived thylakoid membrane"/>
    <property type="evidence" value="ECO:0007669"/>
    <property type="project" value="UniProtKB-SubCell"/>
</dbReference>
<dbReference type="GO" id="GO:0045259">
    <property type="term" value="C:proton-transporting ATP synthase complex"/>
    <property type="evidence" value="ECO:0007669"/>
    <property type="project" value="UniProtKB-KW"/>
</dbReference>
<dbReference type="GO" id="GO:0005524">
    <property type="term" value="F:ATP binding"/>
    <property type="evidence" value="ECO:0007669"/>
    <property type="project" value="UniProtKB-UniRule"/>
</dbReference>
<dbReference type="GO" id="GO:0046933">
    <property type="term" value="F:proton-transporting ATP synthase activity, rotational mechanism"/>
    <property type="evidence" value="ECO:0007669"/>
    <property type="project" value="UniProtKB-UniRule"/>
</dbReference>
<dbReference type="CDD" id="cd12152">
    <property type="entry name" value="F1-ATPase_delta"/>
    <property type="match status" value="1"/>
</dbReference>
<dbReference type="Gene3D" id="2.60.15.10">
    <property type="entry name" value="F0F1 ATP synthase delta/epsilon subunit, N-terminal"/>
    <property type="match status" value="1"/>
</dbReference>
<dbReference type="Gene3D" id="1.10.287.540">
    <property type="entry name" value="Helix hairpin bin"/>
    <property type="match status" value="1"/>
</dbReference>
<dbReference type="HAMAP" id="MF_00530">
    <property type="entry name" value="ATP_synth_epsil_bac"/>
    <property type="match status" value="1"/>
</dbReference>
<dbReference type="InterPro" id="IPR001469">
    <property type="entry name" value="ATP_synth_F1_dsu/esu"/>
</dbReference>
<dbReference type="InterPro" id="IPR020546">
    <property type="entry name" value="ATP_synth_F1_dsu/esu_N"/>
</dbReference>
<dbReference type="InterPro" id="IPR020547">
    <property type="entry name" value="ATP_synth_F1_esu_C"/>
</dbReference>
<dbReference type="InterPro" id="IPR036771">
    <property type="entry name" value="ATPsynth_dsu/esu_N"/>
</dbReference>
<dbReference type="NCBIfam" id="TIGR01216">
    <property type="entry name" value="ATP_synt_epsi"/>
    <property type="match status" value="1"/>
</dbReference>
<dbReference type="PANTHER" id="PTHR13822">
    <property type="entry name" value="ATP SYNTHASE DELTA/EPSILON CHAIN"/>
    <property type="match status" value="1"/>
</dbReference>
<dbReference type="PANTHER" id="PTHR13822:SF10">
    <property type="entry name" value="ATP SYNTHASE EPSILON CHAIN, CHLOROPLASTIC"/>
    <property type="match status" value="1"/>
</dbReference>
<dbReference type="Pfam" id="PF00401">
    <property type="entry name" value="ATP-synt_DE"/>
    <property type="match status" value="1"/>
</dbReference>
<dbReference type="Pfam" id="PF02823">
    <property type="entry name" value="ATP-synt_DE_N"/>
    <property type="match status" value="1"/>
</dbReference>
<dbReference type="SUPFAM" id="SSF51344">
    <property type="entry name" value="Epsilon subunit of F1F0-ATP synthase N-terminal domain"/>
    <property type="match status" value="1"/>
</dbReference>
<accession>B2IUL1</accession>
<name>ATPE_NOSP7</name>